<name>DVL9_ARATH</name>
<reference key="1">
    <citation type="journal article" date="2004" name="Plant J.">
        <title>DVL, a novel class of small polypeptides: overexpression alters Arabidopsis development.</title>
        <authorList>
            <person name="Wen J."/>
            <person name="Lease K.A."/>
            <person name="Walker J.C."/>
        </authorList>
    </citation>
    <scope>NUCLEOTIDE SEQUENCE [MRNA]</scope>
    <scope>GENE FAMILY</scope>
    <scope>NOMENCLATURE</scope>
    <source>
        <strain>cv. Columbia</strain>
    </source>
</reference>
<reference key="2">
    <citation type="journal article" date="2000" name="Nature">
        <title>Sequence and analysis of chromosome 1 of the plant Arabidopsis thaliana.</title>
        <authorList>
            <person name="Theologis A."/>
            <person name="Ecker J.R."/>
            <person name="Palm C.J."/>
            <person name="Federspiel N.A."/>
            <person name="Kaul S."/>
            <person name="White O."/>
            <person name="Alonso J."/>
            <person name="Altafi H."/>
            <person name="Araujo R."/>
            <person name="Bowman C.L."/>
            <person name="Brooks S.Y."/>
            <person name="Buehler E."/>
            <person name="Chan A."/>
            <person name="Chao Q."/>
            <person name="Chen H."/>
            <person name="Cheuk R.F."/>
            <person name="Chin C.W."/>
            <person name="Chung M.K."/>
            <person name="Conn L."/>
            <person name="Conway A.B."/>
            <person name="Conway A.R."/>
            <person name="Creasy T.H."/>
            <person name="Dewar K."/>
            <person name="Dunn P."/>
            <person name="Etgu P."/>
            <person name="Feldblyum T.V."/>
            <person name="Feng J.-D."/>
            <person name="Fong B."/>
            <person name="Fujii C.Y."/>
            <person name="Gill J.E."/>
            <person name="Goldsmith A.D."/>
            <person name="Haas B."/>
            <person name="Hansen N.F."/>
            <person name="Hughes B."/>
            <person name="Huizar L."/>
            <person name="Hunter J.L."/>
            <person name="Jenkins J."/>
            <person name="Johnson-Hopson C."/>
            <person name="Khan S."/>
            <person name="Khaykin E."/>
            <person name="Kim C.J."/>
            <person name="Koo H.L."/>
            <person name="Kremenetskaia I."/>
            <person name="Kurtz D.B."/>
            <person name="Kwan A."/>
            <person name="Lam B."/>
            <person name="Langin-Hooper S."/>
            <person name="Lee A."/>
            <person name="Lee J.M."/>
            <person name="Lenz C.A."/>
            <person name="Li J.H."/>
            <person name="Li Y.-P."/>
            <person name="Lin X."/>
            <person name="Liu S.X."/>
            <person name="Liu Z.A."/>
            <person name="Luros J.S."/>
            <person name="Maiti R."/>
            <person name="Marziali A."/>
            <person name="Militscher J."/>
            <person name="Miranda M."/>
            <person name="Nguyen M."/>
            <person name="Nierman W.C."/>
            <person name="Osborne B.I."/>
            <person name="Pai G."/>
            <person name="Peterson J."/>
            <person name="Pham P.K."/>
            <person name="Rizzo M."/>
            <person name="Rooney T."/>
            <person name="Rowley D."/>
            <person name="Sakano H."/>
            <person name="Salzberg S.L."/>
            <person name="Schwartz J.R."/>
            <person name="Shinn P."/>
            <person name="Southwick A.M."/>
            <person name="Sun H."/>
            <person name="Tallon L.J."/>
            <person name="Tambunga G."/>
            <person name="Toriumi M.J."/>
            <person name="Town C.D."/>
            <person name="Utterback T."/>
            <person name="Van Aken S."/>
            <person name="Vaysberg M."/>
            <person name="Vysotskaia V.S."/>
            <person name="Walker M."/>
            <person name="Wu D."/>
            <person name="Yu G."/>
            <person name="Fraser C.M."/>
            <person name="Venter J.C."/>
            <person name="Davis R.W."/>
        </authorList>
    </citation>
    <scope>NUCLEOTIDE SEQUENCE [LARGE SCALE GENOMIC DNA]</scope>
    <source>
        <strain>cv. Columbia</strain>
    </source>
</reference>
<reference key="3">
    <citation type="journal article" date="2017" name="Plant J.">
        <title>Araport11: a complete reannotation of the Arabidopsis thaliana reference genome.</title>
        <authorList>
            <person name="Cheng C.Y."/>
            <person name="Krishnakumar V."/>
            <person name="Chan A.P."/>
            <person name="Thibaud-Nissen F."/>
            <person name="Schobel S."/>
            <person name="Town C.D."/>
        </authorList>
    </citation>
    <scope>GENOME REANNOTATION</scope>
    <source>
        <strain>cv. Columbia</strain>
    </source>
</reference>
<reference key="4">
    <citation type="journal article" date="2002" name="Science">
        <title>Functional annotation of a full-length Arabidopsis cDNA collection.</title>
        <authorList>
            <person name="Seki M."/>
            <person name="Narusaka M."/>
            <person name="Kamiya A."/>
            <person name="Ishida J."/>
            <person name="Satou M."/>
            <person name="Sakurai T."/>
            <person name="Nakajima M."/>
            <person name="Enju A."/>
            <person name="Akiyama K."/>
            <person name="Oono Y."/>
            <person name="Muramatsu M."/>
            <person name="Hayashizaki Y."/>
            <person name="Kawai J."/>
            <person name="Carninci P."/>
            <person name="Itoh M."/>
            <person name="Ishii Y."/>
            <person name="Arakawa T."/>
            <person name="Shibata K."/>
            <person name="Shinagawa A."/>
            <person name="Shinozaki K."/>
        </authorList>
    </citation>
    <scope>NUCLEOTIDE SEQUENCE [LARGE SCALE MRNA]</scope>
    <source>
        <strain>cv. Columbia</strain>
    </source>
</reference>
<reference key="5">
    <citation type="submission" date="2006-02" db="EMBL/GenBank/DDBJ databases">
        <title>Arabidopsis ORF clones.</title>
        <authorList>
            <person name="Shinn P."/>
            <person name="Chen H."/>
            <person name="Kim C.J."/>
            <person name="Ecker J.R."/>
        </authorList>
    </citation>
    <scope>NUCLEOTIDE SEQUENCE [LARGE SCALE MRNA]</scope>
    <source>
        <strain>cv. Columbia</strain>
    </source>
</reference>
<reference key="6">
    <citation type="journal article" date="2004" name="Plant J.">
        <title>Overexpression of a novel small peptide ROTUNDIFOLIA4 decreases cell proliferation and alters leaf shape in Arabidopsis thaliana.</title>
        <authorList>
            <person name="Narita N.N."/>
            <person name="Moore S."/>
            <person name="Horiguchi G."/>
            <person name="Kubo M."/>
            <person name="Demura T."/>
            <person name="Fukuda H."/>
            <person name="Goodrich J."/>
            <person name="Tsukaya H."/>
        </authorList>
    </citation>
    <scope>GENE FAMILY</scope>
    <source>
        <strain>cv. Columbia</strain>
        <strain>cv. Landsberg erecta</strain>
    </source>
</reference>
<reference key="7">
    <citation type="journal article" date="2009" name="Plant Physiol.">
        <title>Large-scale Arabidopsis phosphoproteome profiling reveals novel chloroplast kinase substrates and phosphorylation networks.</title>
        <authorList>
            <person name="Reiland S."/>
            <person name="Messerli G."/>
            <person name="Baerenfaller K."/>
            <person name="Gerrits B."/>
            <person name="Endler A."/>
            <person name="Grossmann J."/>
            <person name="Gruissem W."/>
            <person name="Baginsky S."/>
        </authorList>
    </citation>
    <scope>IDENTIFICATION BY MASS SPECTROMETRY [LARGE SCALE ANALYSIS]</scope>
</reference>
<reference key="8">
    <citation type="journal article" date="2012" name="J. Exp. Bot.">
        <title>DVL genes play a role in the coordination of socket cell recruitment and differentiation.</title>
        <authorList>
            <person name="Valdivia E.R."/>
            <person name="Chevalier D."/>
            <person name="Sampedro J."/>
            <person name="Taylor I."/>
            <person name="Niederhuth C.E."/>
            <person name="Walker J.C."/>
        </authorList>
    </citation>
    <scope>FUNCTION</scope>
    <source>
        <strain>cv. Columbia</strain>
    </source>
</reference>
<reference key="9">
    <citation type="journal article" date="2015" name="J. Plant Res.">
        <title>Comparative analysis of the RTFL peptide family on the control of plant organogenesis.</title>
        <authorList>
            <person name="Guo P."/>
            <person name="Yoshimura A."/>
            <person name="Ishikawa N."/>
            <person name="Yamaguchi T."/>
            <person name="Guo Y."/>
            <person name="Tsukaya H."/>
        </authorList>
    </citation>
    <scope>REVIEW</scope>
    <scope>GENE FAMILY</scope>
    <scope>NOMENCLATURE</scope>
    <source>
        <strain>cv. Columbia</strain>
    </source>
</reference>
<comment type="function">
    <text evidence="4">Small polypeptide acting as a regulatory molecule which coordinates cellular responses required for differentiation, growth and development, probably by restricting polar cell proliferation in lateral organs and coordinating socket cell recruitment and differentiation at trichome sites.</text>
</comment>
<comment type="subcellular location">
    <subcellularLocation>
        <location evidence="1">Cell membrane</location>
        <topology evidence="2">Single-pass membrane protein</topology>
    </subcellularLocation>
</comment>
<comment type="similarity">
    <text evidence="7">Belongs to the DVL/RTFL small polypeptides family.</text>
</comment>
<sequence length="107" mass="11693">MDEKWRLSKKDALAASCSSSSTSSKSKFSRSFSTSASSSKAPAFVRSSSTKCSVPSSSSSSISRSSSKKEKGSITQKYSSLAKEQKGRFYIMRRCVAMLVCWHKHDS</sequence>
<proteinExistence type="evidence at protein level"/>
<keyword id="KW-1003">Cell membrane</keyword>
<keyword id="KW-0217">Developmental protein</keyword>
<keyword id="KW-0472">Membrane</keyword>
<keyword id="KW-1185">Reference proteome</keyword>
<keyword id="KW-0812">Transmembrane</keyword>
<keyword id="KW-1133">Transmembrane helix</keyword>
<accession>Q6IM92</accession>
<accession>Q8GXJ0</accession>
<evidence type="ECO:0000250" key="1">
    <source>
        <dbReference type="UniProtKB" id="Q7XXN8"/>
    </source>
</evidence>
<evidence type="ECO:0000255" key="2"/>
<evidence type="ECO:0000256" key="3">
    <source>
        <dbReference type="SAM" id="MobiDB-lite"/>
    </source>
</evidence>
<evidence type="ECO:0000269" key="4">
    <source>
    </source>
</evidence>
<evidence type="ECO:0000303" key="5">
    <source>
    </source>
</evidence>
<evidence type="ECO:0000303" key="6">
    <source>
    </source>
</evidence>
<evidence type="ECO:0000305" key="7"/>
<evidence type="ECO:0000312" key="8">
    <source>
        <dbReference type="Araport" id="AT1G07490"/>
    </source>
</evidence>
<evidence type="ECO:0000312" key="9">
    <source>
        <dbReference type="EMBL" id="AC022464"/>
    </source>
</evidence>
<organism>
    <name type="scientific">Arabidopsis thaliana</name>
    <name type="common">Mouse-ear cress</name>
    <dbReference type="NCBI Taxonomy" id="3702"/>
    <lineage>
        <taxon>Eukaryota</taxon>
        <taxon>Viridiplantae</taxon>
        <taxon>Streptophyta</taxon>
        <taxon>Embryophyta</taxon>
        <taxon>Tracheophyta</taxon>
        <taxon>Spermatophyta</taxon>
        <taxon>Magnoliopsida</taxon>
        <taxon>eudicotyledons</taxon>
        <taxon>Gunneridae</taxon>
        <taxon>Pentapetalae</taxon>
        <taxon>rosids</taxon>
        <taxon>malvids</taxon>
        <taxon>Brassicales</taxon>
        <taxon>Brassicaceae</taxon>
        <taxon>Camelineae</taxon>
        <taxon>Arabidopsis</taxon>
    </lineage>
</organism>
<gene>
    <name evidence="5" type="primary">DVL9</name>
    <name evidence="6" type="synonym">RTFL3</name>
    <name evidence="8" type="ordered locus">At1g07490</name>
    <name evidence="9" type="ORF">F22G5.13</name>
</gene>
<dbReference type="EMBL" id="BK001752">
    <property type="protein sequence ID" value="DAA02280.1"/>
    <property type="molecule type" value="mRNA"/>
</dbReference>
<dbReference type="EMBL" id="AC022464">
    <property type="status" value="NOT_ANNOTATED_CDS"/>
    <property type="molecule type" value="Genomic_DNA"/>
</dbReference>
<dbReference type="EMBL" id="CP002684">
    <property type="protein sequence ID" value="AEE28135.1"/>
    <property type="molecule type" value="Genomic_DNA"/>
</dbReference>
<dbReference type="EMBL" id="AK118212">
    <property type="protein sequence ID" value="BAC42834.1"/>
    <property type="molecule type" value="mRNA"/>
</dbReference>
<dbReference type="EMBL" id="BT024668">
    <property type="protein sequence ID" value="ABD57493.1"/>
    <property type="molecule type" value="mRNA"/>
</dbReference>
<dbReference type="RefSeq" id="NP_172229.2">
    <property type="nucleotide sequence ID" value="NM_100623.2"/>
</dbReference>
<dbReference type="STRING" id="3702.Q6IM92"/>
<dbReference type="iPTMnet" id="Q6IM92"/>
<dbReference type="PaxDb" id="3702-AT1G07490.1"/>
<dbReference type="ProteomicsDB" id="183111"/>
<dbReference type="EnsemblPlants" id="AT1G07490.1">
    <property type="protein sequence ID" value="AT1G07490.1"/>
    <property type="gene ID" value="AT1G07490"/>
</dbReference>
<dbReference type="GeneID" id="837263"/>
<dbReference type="Gramene" id="AT1G07490.1">
    <property type="protein sequence ID" value="AT1G07490.1"/>
    <property type="gene ID" value="AT1G07490"/>
</dbReference>
<dbReference type="KEGG" id="ath:AT1G07490"/>
<dbReference type="Araport" id="AT1G07490"/>
<dbReference type="TAIR" id="AT1G07490">
    <property type="gene designation" value="RTFL3"/>
</dbReference>
<dbReference type="eggNOG" id="ENOG502S3XH">
    <property type="taxonomic scope" value="Eukaryota"/>
</dbReference>
<dbReference type="HOGENOM" id="CLU_150897_0_0_1"/>
<dbReference type="InParanoid" id="Q6IM92"/>
<dbReference type="OMA" id="PTHSHTE"/>
<dbReference type="OrthoDB" id="1613769at2759"/>
<dbReference type="PRO" id="PR:Q6IM92"/>
<dbReference type="Proteomes" id="UP000006548">
    <property type="component" value="Chromosome 1"/>
</dbReference>
<dbReference type="ExpressionAtlas" id="Q6IM92">
    <property type="expression patterns" value="baseline and differential"/>
</dbReference>
<dbReference type="GO" id="GO:0005886">
    <property type="term" value="C:plasma membrane"/>
    <property type="evidence" value="ECO:0000250"/>
    <property type="project" value="UniProtKB"/>
</dbReference>
<dbReference type="GO" id="GO:0008285">
    <property type="term" value="P:negative regulation of cell population proliferation"/>
    <property type="evidence" value="ECO:0000250"/>
    <property type="project" value="UniProtKB"/>
</dbReference>
<dbReference type="GO" id="GO:0048367">
    <property type="term" value="P:shoot system development"/>
    <property type="evidence" value="ECO:0000250"/>
    <property type="project" value="TAIR"/>
</dbReference>
<dbReference type="InterPro" id="IPR012552">
    <property type="entry name" value="DVL"/>
</dbReference>
<dbReference type="InterPro" id="IPR052692">
    <property type="entry name" value="DVL_RTFL_polypeptides"/>
</dbReference>
<dbReference type="PANTHER" id="PTHR47596">
    <property type="entry name" value="DVL13"/>
    <property type="match status" value="1"/>
</dbReference>
<dbReference type="PANTHER" id="PTHR47596:SF2">
    <property type="entry name" value="SMALL POLYPEPTIDE DEVIL 9"/>
    <property type="match status" value="1"/>
</dbReference>
<dbReference type="Pfam" id="PF08137">
    <property type="entry name" value="DVL"/>
    <property type="match status" value="1"/>
</dbReference>
<feature type="chain" id="PRO_0000452777" description="Small polypeptide DEVIL 9">
    <location>
        <begin position="1"/>
        <end position="107"/>
    </location>
</feature>
<feature type="transmembrane region" description="Helical" evidence="2">
    <location>
        <begin position="9"/>
        <end position="29"/>
    </location>
</feature>
<feature type="region of interest" description="Disordered" evidence="3">
    <location>
        <begin position="1"/>
        <end position="79"/>
    </location>
</feature>
<feature type="region of interest" description="Required for DVL/RTFL small polypeptide activity" evidence="1">
    <location>
        <begin position="73"/>
        <end position="104"/>
    </location>
</feature>
<feature type="compositionally biased region" description="Basic and acidic residues" evidence="3">
    <location>
        <begin position="1"/>
        <end position="12"/>
    </location>
</feature>
<feature type="compositionally biased region" description="Low complexity" evidence="3">
    <location>
        <begin position="13"/>
        <end position="65"/>
    </location>
</feature>
<feature type="sequence conflict" description="In Ref. 4; BAC42834." evidence="7" ref="4">
    <original>V</original>
    <variation>A</variation>
    <location>
        <position position="54"/>
    </location>
</feature>
<protein>
    <recommendedName>
        <fullName evidence="5">Small polypeptide DEVIL 9</fullName>
    </recommendedName>
    <alternativeName>
        <fullName evidence="6">Small polypeptide ROTUNDIFOLIA like 3</fullName>
        <shortName evidence="6">Small polypeptide ROT-FOUR-LIKE 3</shortName>
    </alternativeName>
</protein>